<protein>
    <recommendedName>
        <fullName evidence="1">Translation initiation factor IF-1</fullName>
    </recommendedName>
</protein>
<name>IF1_FRAT1</name>
<comment type="function">
    <text evidence="1">One of the essential components for the initiation of protein synthesis. Stabilizes the binding of IF-2 and IF-3 on the 30S subunit to which N-formylmethionyl-tRNA(fMet) subsequently binds. Helps modulate mRNA selection, yielding the 30S pre-initiation complex (PIC). Upon addition of the 50S ribosomal subunit IF-1, IF-2 and IF-3 are released leaving the mature 70S translation initiation complex.</text>
</comment>
<comment type="subunit">
    <text evidence="1">Component of the 30S ribosomal translation pre-initiation complex which assembles on the 30S ribosome in the order IF-2 and IF-3, IF-1 and N-formylmethionyl-tRNA(fMet); mRNA recruitment can occur at any time during PIC assembly.</text>
</comment>
<comment type="subcellular location">
    <subcellularLocation>
        <location evidence="1">Cytoplasm</location>
    </subcellularLocation>
</comment>
<comment type="similarity">
    <text evidence="1">Belongs to the IF-1 family.</text>
</comment>
<dbReference type="EMBL" id="AM286280">
    <property type="protein sequence ID" value="CAL08982.1"/>
    <property type="molecule type" value="Genomic_DNA"/>
</dbReference>
<dbReference type="RefSeq" id="WP_003016350.1">
    <property type="nucleotide sequence ID" value="NC_008245.1"/>
</dbReference>
<dbReference type="SMR" id="Q14HN8"/>
<dbReference type="KEGG" id="ftf:FTF0966"/>
<dbReference type="HOGENOM" id="CLU_151267_1_0_6"/>
<dbReference type="GO" id="GO:0005829">
    <property type="term" value="C:cytosol"/>
    <property type="evidence" value="ECO:0007669"/>
    <property type="project" value="TreeGrafter"/>
</dbReference>
<dbReference type="GO" id="GO:0043022">
    <property type="term" value="F:ribosome binding"/>
    <property type="evidence" value="ECO:0007669"/>
    <property type="project" value="UniProtKB-UniRule"/>
</dbReference>
<dbReference type="GO" id="GO:0019843">
    <property type="term" value="F:rRNA binding"/>
    <property type="evidence" value="ECO:0007669"/>
    <property type="project" value="UniProtKB-UniRule"/>
</dbReference>
<dbReference type="GO" id="GO:0003743">
    <property type="term" value="F:translation initiation factor activity"/>
    <property type="evidence" value="ECO:0007669"/>
    <property type="project" value="UniProtKB-UniRule"/>
</dbReference>
<dbReference type="CDD" id="cd04451">
    <property type="entry name" value="S1_IF1"/>
    <property type="match status" value="1"/>
</dbReference>
<dbReference type="FunFam" id="2.40.50.140:FF:000002">
    <property type="entry name" value="Translation initiation factor IF-1"/>
    <property type="match status" value="1"/>
</dbReference>
<dbReference type="Gene3D" id="2.40.50.140">
    <property type="entry name" value="Nucleic acid-binding proteins"/>
    <property type="match status" value="1"/>
</dbReference>
<dbReference type="HAMAP" id="MF_00075">
    <property type="entry name" value="IF_1"/>
    <property type="match status" value="1"/>
</dbReference>
<dbReference type="InterPro" id="IPR012340">
    <property type="entry name" value="NA-bd_OB-fold"/>
</dbReference>
<dbReference type="InterPro" id="IPR006196">
    <property type="entry name" value="RNA-binding_domain_S1_IF1"/>
</dbReference>
<dbReference type="InterPro" id="IPR003029">
    <property type="entry name" value="S1_domain"/>
</dbReference>
<dbReference type="InterPro" id="IPR004368">
    <property type="entry name" value="TIF_IF1"/>
</dbReference>
<dbReference type="NCBIfam" id="TIGR00008">
    <property type="entry name" value="infA"/>
    <property type="match status" value="1"/>
</dbReference>
<dbReference type="PANTHER" id="PTHR33370">
    <property type="entry name" value="TRANSLATION INITIATION FACTOR IF-1, CHLOROPLASTIC"/>
    <property type="match status" value="1"/>
</dbReference>
<dbReference type="PANTHER" id="PTHR33370:SF1">
    <property type="entry name" value="TRANSLATION INITIATION FACTOR IF-1, CHLOROPLASTIC"/>
    <property type="match status" value="1"/>
</dbReference>
<dbReference type="Pfam" id="PF01176">
    <property type="entry name" value="eIF-1a"/>
    <property type="match status" value="1"/>
</dbReference>
<dbReference type="SMART" id="SM00316">
    <property type="entry name" value="S1"/>
    <property type="match status" value="1"/>
</dbReference>
<dbReference type="SUPFAM" id="SSF50249">
    <property type="entry name" value="Nucleic acid-binding proteins"/>
    <property type="match status" value="1"/>
</dbReference>
<dbReference type="PROSITE" id="PS50832">
    <property type="entry name" value="S1_IF1_TYPE"/>
    <property type="match status" value="1"/>
</dbReference>
<proteinExistence type="inferred from homology"/>
<gene>
    <name evidence="1" type="primary">infA</name>
    <name type="ordered locus">FTF0966</name>
</gene>
<feature type="chain" id="PRO_0000263803" description="Translation initiation factor IF-1">
    <location>
        <begin position="1"/>
        <end position="72"/>
    </location>
</feature>
<feature type="domain" description="S1-like" evidence="1">
    <location>
        <begin position="1"/>
        <end position="72"/>
    </location>
</feature>
<sequence>MAKEDCIEMEGVVLEALPNTMFRVELENGRIVTAHISGKMRKNYIRILTGDKVVVEITPYDLTKGRIKFRSK</sequence>
<accession>Q14HN8</accession>
<organism>
    <name type="scientific">Francisella tularensis subsp. tularensis (strain FSC 198)</name>
    <dbReference type="NCBI Taxonomy" id="393115"/>
    <lineage>
        <taxon>Bacteria</taxon>
        <taxon>Pseudomonadati</taxon>
        <taxon>Pseudomonadota</taxon>
        <taxon>Gammaproteobacteria</taxon>
        <taxon>Thiotrichales</taxon>
        <taxon>Francisellaceae</taxon>
        <taxon>Francisella</taxon>
    </lineage>
</organism>
<evidence type="ECO:0000255" key="1">
    <source>
        <dbReference type="HAMAP-Rule" id="MF_00075"/>
    </source>
</evidence>
<reference key="1">
    <citation type="journal article" date="2007" name="PLoS ONE">
        <title>Genome sequencing shows that European isolates of Francisella tularensis subspecies tularensis are almost identical to US laboratory strain Schu S4.</title>
        <authorList>
            <person name="Chaudhuri R.R."/>
            <person name="Ren C.-P."/>
            <person name="Desmond L."/>
            <person name="Vincent G.A."/>
            <person name="Silman N.J."/>
            <person name="Brehm J.K."/>
            <person name="Elmore M.J."/>
            <person name="Hudson M.J."/>
            <person name="Forsman M."/>
            <person name="Isherwood K.E."/>
            <person name="Gurycova D."/>
            <person name="Minton N.P."/>
            <person name="Titball R.W."/>
            <person name="Pallen M.J."/>
            <person name="Vipond R."/>
        </authorList>
    </citation>
    <scope>NUCLEOTIDE SEQUENCE [LARGE SCALE GENOMIC DNA]</scope>
    <source>
        <strain>FSC 198</strain>
    </source>
</reference>
<keyword id="KW-0963">Cytoplasm</keyword>
<keyword id="KW-0396">Initiation factor</keyword>
<keyword id="KW-0648">Protein biosynthesis</keyword>
<keyword id="KW-0694">RNA-binding</keyword>
<keyword id="KW-0699">rRNA-binding</keyword>